<reference key="1">
    <citation type="journal article" date="2005" name="Science">
        <title>The genome sequence of Trypanosoma cruzi, etiologic agent of Chagas disease.</title>
        <authorList>
            <person name="El-Sayed N.M.A."/>
            <person name="Myler P.J."/>
            <person name="Bartholomeu D.C."/>
            <person name="Nilsson D."/>
            <person name="Aggarwal G."/>
            <person name="Tran A.-N."/>
            <person name="Ghedin E."/>
            <person name="Worthey E.A."/>
            <person name="Delcher A.L."/>
            <person name="Blandin G."/>
            <person name="Westenberger S.J."/>
            <person name="Caler E."/>
            <person name="Cerqueira G.C."/>
            <person name="Branche C."/>
            <person name="Haas B."/>
            <person name="Anupama A."/>
            <person name="Arner E."/>
            <person name="Aslund L."/>
            <person name="Attipoe P."/>
            <person name="Bontempi E."/>
            <person name="Bringaud F."/>
            <person name="Burton P."/>
            <person name="Cadag E."/>
            <person name="Campbell D.A."/>
            <person name="Carrington M."/>
            <person name="Crabtree J."/>
            <person name="Darban H."/>
            <person name="da Silveira J.F."/>
            <person name="de Jong P."/>
            <person name="Edwards K."/>
            <person name="Englund P.T."/>
            <person name="Fazelina G."/>
            <person name="Feldblyum T."/>
            <person name="Ferella M."/>
            <person name="Frasch A.C."/>
            <person name="Gull K."/>
            <person name="Horn D."/>
            <person name="Hou L."/>
            <person name="Huang Y."/>
            <person name="Kindlund E."/>
            <person name="Klingbeil M."/>
            <person name="Kluge S."/>
            <person name="Koo H."/>
            <person name="Lacerda D."/>
            <person name="Levin M.J."/>
            <person name="Lorenzi H."/>
            <person name="Louie T."/>
            <person name="Machado C.R."/>
            <person name="McCulloch R."/>
            <person name="McKenna A."/>
            <person name="Mizuno Y."/>
            <person name="Mottram J.C."/>
            <person name="Nelson S."/>
            <person name="Ochaya S."/>
            <person name="Osoegawa K."/>
            <person name="Pai G."/>
            <person name="Parsons M."/>
            <person name="Pentony M."/>
            <person name="Pettersson U."/>
            <person name="Pop M."/>
            <person name="Ramirez J.L."/>
            <person name="Rinta J."/>
            <person name="Robertson L."/>
            <person name="Salzberg S.L."/>
            <person name="Sanchez D.O."/>
            <person name="Seyler A."/>
            <person name="Sharma R."/>
            <person name="Shetty J."/>
            <person name="Simpson A.J."/>
            <person name="Sisk E."/>
            <person name="Tammi M.T."/>
            <person name="Tarleton R."/>
            <person name="Teixeira S."/>
            <person name="Van Aken S."/>
            <person name="Vogt C."/>
            <person name="Ward P.N."/>
            <person name="Wickstead B."/>
            <person name="Wortman J."/>
            <person name="White O."/>
            <person name="Fraser C.M."/>
            <person name="Stuart K.D."/>
            <person name="Andersson B."/>
        </authorList>
    </citation>
    <scope>NUCLEOTIDE SEQUENCE [LARGE SCALE GENOMIC DNA] (ALLELES 1 AND 2)</scope>
    <source>
        <strain>CL Brener</strain>
    </source>
</reference>
<dbReference type="EMBL" id="AAHK01000067">
    <property type="protein sequence ID" value="EAN98181.1"/>
    <property type="status" value="ALT_INIT"/>
    <property type="molecule type" value="Genomic_DNA"/>
</dbReference>
<dbReference type="RefSeq" id="XP_820032.1">
    <property type="nucleotide sequence ID" value="XM_814939.1"/>
</dbReference>
<dbReference type="SMR" id="Q4E097"/>
<dbReference type="FunCoup" id="Q4E097">
    <property type="interactions" value="634"/>
</dbReference>
<dbReference type="STRING" id="353153.Q4E097"/>
<dbReference type="PaxDb" id="353153-Q4E097"/>
<dbReference type="EnsemblProtists" id="EAN98181">
    <property type="protein sequence ID" value="EAN98181"/>
    <property type="gene ID" value="Tc00.1047053506679.70"/>
</dbReference>
<dbReference type="GeneID" id="3552617"/>
<dbReference type="KEGG" id="tcr:506679.70"/>
<dbReference type="eggNOG" id="KOG3185">
    <property type="taxonomic scope" value="Eukaryota"/>
</dbReference>
<dbReference type="InParanoid" id="Q4E097"/>
<dbReference type="Proteomes" id="UP000002296">
    <property type="component" value="Unassembled WGS sequence"/>
</dbReference>
<dbReference type="GO" id="GO:0005737">
    <property type="term" value="C:cytoplasm"/>
    <property type="evidence" value="ECO:0007669"/>
    <property type="project" value="UniProtKB-SubCell"/>
</dbReference>
<dbReference type="GO" id="GO:0005730">
    <property type="term" value="C:nucleolus"/>
    <property type="evidence" value="ECO:0007669"/>
    <property type="project" value="UniProtKB-SubCell"/>
</dbReference>
<dbReference type="GO" id="GO:0043023">
    <property type="term" value="F:ribosomal large subunit binding"/>
    <property type="evidence" value="ECO:0007669"/>
    <property type="project" value="UniProtKB-UniRule"/>
</dbReference>
<dbReference type="GO" id="GO:0003743">
    <property type="term" value="F:translation initiation factor activity"/>
    <property type="evidence" value="ECO:0007669"/>
    <property type="project" value="UniProtKB-UniRule"/>
</dbReference>
<dbReference type="GO" id="GO:0042256">
    <property type="term" value="P:cytosolic ribosome assembly"/>
    <property type="evidence" value="ECO:0007669"/>
    <property type="project" value="UniProtKB-UniRule"/>
</dbReference>
<dbReference type="GO" id="GO:0042273">
    <property type="term" value="P:ribosomal large subunit biogenesis"/>
    <property type="evidence" value="ECO:0007669"/>
    <property type="project" value="UniProtKB-UniRule"/>
</dbReference>
<dbReference type="CDD" id="cd00527">
    <property type="entry name" value="IF6"/>
    <property type="match status" value="1"/>
</dbReference>
<dbReference type="FunFam" id="3.75.10.10:FF:000001">
    <property type="entry name" value="Eukaryotic translation initiation factor 6"/>
    <property type="match status" value="1"/>
</dbReference>
<dbReference type="Gene3D" id="3.75.10.10">
    <property type="entry name" value="L-arginine/glycine Amidinotransferase, Chain A"/>
    <property type="match status" value="1"/>
</dbReference>
<dbReference type="HAMAP" id="MF_00032">
    <property type="entry name" value="eIF_6"/>
    <property type="match status" value="1"/>
</dbReference>
<dbReference type="InterPro" id="IPR002769">
    <property type="entry name" value="eIF6"/>
</dbReference>
<dbReference type="NCBIfam" id="TIGR00323">
    <property type="entry name" value="eIF-6"/>
    <property type="match status" value="1"/>
</dbReference>
<dbReference type="PANTHER" id="PTHR10784">
    <property type="entry name" value="TRANSLATION INITIATION FACTOR 6"/>
    <property type="match status" value="1"/>
</dbReference>
<dbReference type="Pfam" id="PF01912">
    <property type="entry name" value="eIF-6"/>
    <property type="match status" value="1"/>
</dbReference>
<dbReference type="PIRSF" id="PIRSF006413">
    <property type="entry name" value="IF-6"/>
    <property type="match status" value="1"/>
</dbReference>
<dbReference type="SMART" id="SM00654">
    <property type="entry name" value="eIF6"/>
    <property type="match status" value="1"/>
</dbReference>
<dbReference type="SUPFAM" id="SSF55909">
    <property type="entry name" value="Pentein"/>
    <property type="match status" value="1"/>
</dbReference>
<feature type="chain" id="PRO_0000402104" description="Eukaryotic translation initiation factor 6">
    <location>
        <begin position="1"/>
        <end position="248"/>
    </location>
</feature>
<sequence>MTLRTRFESSDDVGVFSRLTNAYCLVTAGGSQNFYSVFEQELANHIPVVYTSIGGSRVIGRLTCGNRHGLVVPSIATDQELQHLRNSLPDSVKVQRVEERLNALGNCVVCNDHVALIHTDLSRETEEILRDTLQVQTFRTSIAENALVGSYAVVNNKGCMVHPKTPAQDMDEIASLLQVPVVAGTINRGNAAIGSGLVVNDWAAFCGLNTTATEITVVERIFQLRRDLGGDEPNLLQQLRDTLVDELA</sequence>
<proteinExistence type="inferred from homology"/>
<name>IF61_TRYCC</name>
<evidence type="ECO:0000255" key="1">
    <source>
        <dbReference type="HAMAP-Rule" id="MF_03132"/>
    </source>
</evidence>
<evidence type="ECO:0000305" key="2"/>
<protein>
    <recommendedName>
        <fullName evidence="1">Eukaryotic translation initiation factor 6</fullName>
        <shortName evidence="1">eIF-6</shortName>
    </recommendedName>
</protein>
<keyword id="KW-0963">Cytoplasm</keyword>
<keyword id="KW-0396">Initiation factor</keyword>
<keyword id="KW-0539">Nucleus</keyword>
<keyword id="KW-0648">Protein biosynthesis</keyword>
<keyword id="KW-1185">Reference proteome</keyword>
<keyword id="KW-0690">Ribosome biogenesis</keyword>
<organism>
    <name type="scientific">Trypanosoma cruzi (strain CL Brener)</name>
    <dbReference type="NCBI Taxonomy" id="353153"/>
    <lineage>
        <taxon>Eukaryota</taxon>
        <taxon>Discoba</taxon>
        <taxon>Euglenozoa</taxon>
        <taxon>Kinetoplastea</taxon>
        <taxon>Metakinetoplastina</taxon>
        <taxon>Trypanosomatida</taxon>
        <taxon>Trypanosomatidae</taxon>
        <taxon>Trypanosoma</taxon>
        <taxon>Schizotrypanum</taxon>
    </lineage>
</organism>
<accession>Q4E097</accession>
<comment type="function">
    <text evidence="1">Binds to the 60S ribosomal subunit and prevents its association with the 40S ribosomal subunit to form the 80S initiation complex in the cytoplasm. May also be involved in ribosome biogenesis.</text>
</comment>
<comment type="subunit">
    <text evidence="1">Monomer. Associates with the 60S ribosomal subunit.</text>
</comment>
<comment type="subcellular location">
    <subcellularLocation>
        <location evidence="1">Cytoplasm</location>
    </subcellularLocation>
    <subcellularLocation>
        <location evidence="1">Nucleus</location>
        <location evidence="1">Nucleolus</location>
    </subcellularLocation>
    <text evidence="1">Shuttles between cytoplasm and nucleus/nucleolus.</text>
</comment>
<comment type="similarity">
    <text evidence="1">Belongs to the eIF-6 family.</text>
</comment>
<comment type="sequence caution" evidence="2">
    <conflict type="erroneous initiation">
        <sequence resource="EMBL-CDS" id="EAN98181"/>
    </conflict>
    <text>Extended N-terminus.</text>
</comment>
<gene>
    <name evidence="1" type="primary">EIF6</name>
    <name type="ORF">Tc00.1047053506679.70</name>
</gene>